<protein>
    <recommendedName>
        <fullName evidence="1">Large ribosomal subunit protein bL9</fullName>
    </recommendedName>
    <alternativeName>
        <fullName evidence="2">50S ribosomal protein L9</fullName>
    </alternativeName>
</protein>
<gene>
    <name evidence="1" type="primary">rplI</name>
    <name type="ordered locus">PA4932</name>
</gene>
<dbReference type="EMBL" id="AE004091">
    <property type="protein sequence ID" value="AAG08317.1"/>
    <property type="molecule type" value="Genomic_DNA"/>
</dbReference>
<dbReference type="PIR" id="F83029">
    <property type="entry name" value="F83029"/>
</dbReference>
<dbReference type="RefSeq" id="NP_253619.1">
    <property type="nucleotide sequence ID" value="NC_002516.2"/>
</dbReference>
<dbReference type="RefSeq" id="WP_003095627.1">
    <property type="nucleotide sequence ID" value="NZ_QZGE01000002.1"/>
</dbReference>
<dbReference type="PDB" id="7UNR">
    <property type="method" value="EM"/>
    <property type="resolution" value="2.90 A"/>
    <property type="chains" value="H=1-148"/>
</dbReference>
<dbReference type="PDB" id="7UNU">
    <property type="method" value="EM"/>
    <property type="resolution" value="2.90 A"/>
    <property type="chains" value="H=1-148"/>
</dbReference>
<dbReference type="PDB" id="7UNV">
    <property type="method" value="EM"/>
    <property type="resolution" value="2.70 A"/>
    <property type="chains" value="H=1-148"/>
</dbReference>
<dbReference type="PDB" id="7UNW">
    <property type="method" value="EM"/>
    <property type="resolution" value="2.60 A"/>
    <property type="chains" value="H=1-148"/>
</dbReference>
<dbReference type="PDB" id="8CD1">
    <property type="method" value="EM"/>
    <property type="resolution" value="3.00 A"/>
    <property type="chains" value="H=1-148"/>
</dbReference>
<dbReference type="PDB" id="8RWG">
    <property type="method" value="EM"/>
    <property type="resolution" value="2.46 A"/>
    <property type="chains" value="I=1-148"/>
</dbReference>
<dbReference type="PDBsum" id="7UNR"/>
<dbReference type="PDBsum" id="7UNU"/>
<dbReference type="PDBsum" id="7UNV"/>
<dbReference type="PDBsum" id="7UNW"/>
<dbReference type="PDBsum" id="8CD1"/>
<dbReference type="PDBsum" id="8RWG"/>
<dbReference type="EMDB" id="EMD-16566"/>
<dbReference type="EMDB" id="EMD-19547"/>
<dbReference type="EMDB" id="EMD-26630"/>
<dbReference type="EMDB" id="EMD-26633"/>
<dbReference type="EMDB" id="EMD-26634"/>
<dbReference type="EMDB" id="EMD-26635"/>
<dbReference type="SMR" id="Q9HUN2"/>
<dbReference type="FunCoup" id="Q9HUN2">
    <property type="interactions" value="934"/>
</dbReference>
<dbReference type="STRING" id="208964.PA4932"/>
<dbReference type="PaxDb" id="208964-PA4932"/>
<dbReference type="GeneID" id="77223479"/>
<dbReference type="GeneID" id="879626"/>
<dbReference type="KEGG" id="pae:PA4932"/>
<dbReference type="PATRIC" id="fig|208964.12.peg.5165"/>
<dbReference type="PseudoCAP" id="PA4932"/>
<dbReference type="HOGENOM" id="CLU_078938_4_1_6"/>
<dbReference type="InParanoid" id="Q9HUN2"/>
<dbReference type="OrthoDB" id="9788336at2"/>
<dbReference type="PhylomeDB" id="Q9HUN2"/>
<dbReference type="BioCyc" id="PAER208964:G1FZ6-5046-MONOMER"/>
<dbReference type="PRO" id="PR:Q9HUN2"/>
<dbReference type="Proteomes" id="UP000002438">
    <property type="component" value="Chromosome"/>
</dbReference>
<dbReference type="GO" id="GO:0022625">
    <property type="term" value="C:cytosolic large ribosomal subunit"/>
    <property type="evidence" value="ECO:0000318"/>
    <property type="project" value="GO_Central"/>
</dbReference>
<dbReference type="GO" id="GO:0019843">
    <property type="term" value="F:rRNA binding"/>
    <property type="evidence" value="ECO:0007669"/>
    <property type="project" value="UniProtKB-UniRule"/>
</dbReference>
<dbReference type="GO" id="GO:0003735">
    <property type="term" value="F:structural constituent of ribosome"/>
    <property type="evidence" value="ECO:0007669"/>
    <property type="project" value="InterPro"/>
</dbReference>
<dbReference type="GO" id="GO:0006412">
    <property type="term" value="P:translation"/>
    <property type="evidence" value="ECO:0007669"/>
    <property type="project" value="UniProtKB-UniRule"/>
</dbReference>
<dbReference type="FunFam" id="3.40.5.10:FF:000001">
    <property type="entry name" value="50S ribosomal protein L9"/>
    <property type="match status" value="1"/>
</dbReference>
<dbReference type="Gene3D" id="3.10.430.100">
    <property type="entry name" value="Ribosomal protein L9, C-terminal domain"/>
    <property type="match status" value="1"/>
</dbReference>
<dbReference type="Gene3D" id="3.40.5.10">
    <property type="entry name" value="Ribosomal protein L9, N-terminal domain"/>
    <property type="match status" value="1"/>
</dbReference>
<dbReference type="HAMAP" id="MF_00503">
    <property type="entry name" value="Ribosomal_bL9"/>
    <property type="match status" value="1"/>
</dbReference>
<dbReference type="InterPro" id="IPR000244">
    <property type="entry name" value="Ribosomal_bL9"/>
</dbReference>
<dbReference type="InterPro" id="IPR009027">
    <property type="entry name" value="Ribosomal_bL9/RNase_H1_N"/>
</dbReference>
<dbReference type="InterPro" id="IPR020594">
    <property type="entry name" value="Ribosomal_bL9_bac/chp"/>
</dbReference>
<dbReference type="InterPro" id="IPR020069">
    <property type="entry name" value="Ribosomal_bL9_C"/>
</dbReference>
<dbReference type="InterPro" id="IPR036791">
    <property type="entry name" value="Ribosomal_bL9_C_sf"/>
</dbReference>
<dbReference type="InterPro" id="IPR020070">
    <property type="entry name" value="Ribosomal_bL9_N"/>
</dbReference>
<dbReference type="InterPro" id="IPR036935">
    <property type="entry name" value="Ribosomal_bL9_N_sf"/>
</dbReference>
<dbReference type="NCBIfam" id="TIGR00158">
    <property type="entry name" value="L9"/>
    <property type="match status" value="1"/>
</dbReference>
<dbReference type="PANTHER" id="PTHR21368">
    <property type="entry name" value="50S RIBOSOMAL PROTEIN L9"/>
    <property type="match status" value="1"/>
</dbReference>
<dbReference type="Pfam" id="PF03948">
    <property type="entry name" value="Ribosomal_L9_C"/>
    <property type="match status" value="1"/>
</dbReference>
<dbReference type="Pfam" id="PF01281">
    <property type="entry name" value="Ribosomal_L9_N"/>
    <property type="match status" value="1"/>
</dbReference>
<dbReference type="SUPFAM" id="SSF55658">
    <property type="entry name" value="L9 N-domain-like"/>
    <property type="match status" value="1"/>
</dbReference>
<dbReference type="SUPFAM" id="SSF55653">
    <property type="entry name" value="Ribosomal protein L9 C-domain"/>
    <property type="match status" value="1"/>
</dbReference>
<dbReference type="PROSITE" id="PS00651">
    <property type="entry name" value="RIBOSOMAL_L9"/>
    <property type="match status" value="1"/>
</dbReference>
<evidence type="ECO:0000255" key="1">
    <source>
        <dbReference type="HAMAP-Rule" id="MF_00503"/>
    </source>
</evidence>
<evidence type="ECO:0000305" key="2"/>
<keyword id="KW-0002">3D-structure</keyword>
<keyword id="KW-1185">Reference proteome</keyword>
<keyword id="KW-0687">Ribonucleoprotein</keyword>
<keyword id="KW-0689">Ribosomal protein</keyword>
<keyword id="KW-0694">RNA-binding</keyword>
<keyword id="KW-0699">rRNA-binding</keyword>
<comment type="function">
    <text evidence="1">Binds to the 23S rRNA.</text>
</comment>
<comment type="similarity">
    <text evidence="1">Belongs to the bacterial ribosomal protein bL9 family.</text>
</comment>
<accession>Q9HUN2</accession>
<organism>
    <name type="scientific">Pseudomonas aeruginosa (strain ATCC 15692 / DSM 22644 / CIP 104116 / JCM 14847 / LMG 12228 / 1C / PRS 101 / PAO1)</name>
    <dbReference type="NCBI Taxonomy" id="208964"/>
    <lineage>
        <taxon>Bacteria</taxon>
        <taxon>Pseudomonadati</taxon>
        <taxon>Pseudomonadota</taxon>
        <taxon>Gammaproteobacteria</taxon>
        <taxon>Pseudomonadales</taxon>
        <taxon>Pseudomonadaceae</taxon>
        <taxon>Pseudomonas</taxon>
    </lineage>
</organism>
<feature type="chain" id="PRO_0000176661" description="Large ribosomal subunit protein bL9">
    <location>
        <begin position="1"/>
        <end position="148"/>
    </location>
</feature>
<sequence>MEVILLEKVANLGNLGDKVNIKGGYARNFLLPQGKATVATAENVAAFEARRAELEKAAAEKKAAAEARAAQLSELVVTLGAHAGDEGKLFGSIGTRDIAEAVSAAGYPLEKAEVRLPNGALRNTGEFDVAVHLHTDVETTLKLIIVAE</sequence>
<name>RL9_PSEAE</name>
<reference key="1">
    <citation type="journal article" date="2000" name="Nature">
        <title>Complete genome sequence of Pseudomonas aeruginosa PAO1, an opportunistic pathogen.</title>
        <authorList>
            <person name="Stover C.K."/>
            <person name="Pham X.-Q.T."/>
            <person name="Erwin A.L."/>
            <person name="Mizoguchi S.D."/>
            <person name="Warrener P."/>
            <person name="Hickey M.J."/>
            <person name="Brinkman F.S.L."/>
            <person name="Hufnagle W.O."/>
            <person name="Kowalik D.J."/>
            <person name="Lagrou M."/>
            <person name="Garber R.L."/>
            <person name="Goltry L."/>
            <person name="Tolentino E."/>
            <person name="Westbrock-Wadman S."/>
            <person name="Yuan Y."/>
            <person name="Brody L.L."/>
            <person name="Coulter S.N."/>
            <person name="Folger K.R."/>
            <person name="Kas A."/>
            <person name="Larbig K."/>
            <person name="Lim R.M."/>
            <person name="Smith K.A."/>
            <person name="Spencer D.H."/>
            <person name="Wong G.K.-S."/>
            <person name="Wu Z."/>
            <person name="Paulsen I.T."/>
            <person name="Reizer J."/>
            <person name="Saier M.H. Jr."/>
            <person name="Hancock R.E.W."/>
            <person name="Lory S."/>
            <person name="Olson M.V."/>
        </authorList>
    </citation>
    <scope>NUCLEOTIDE SEQUENCE [LARGE SCALE GENOMIC DNA]</scope>
    <source>
        <strain>ATCC 15692 / DSM 22644 / CIP 104116 / JCM 14847 / LMG 12228 / 1C / PRS 101 / PAO1</strain>
    </source>
</reference>
<proteinExistence type="evidence at protein level"/>